<proteinExistence type="evidence at transcript level"/>
<reference key="1">
    <citation type="journal article" date="2001" name="Cell">
        <title>A diverse family of GPCRs expressed in specific subsets of nociceptive sensory neurons.</title>
        <authorList>
            <person name="Dong X."/>
            <person name="Han S.-K."/>
            <person name="Zylka M.J."/>
            <person name="Simon M.I."/>
            <person name="Anderson D.J."/>
        </authorList>
    </citation>
    <scope>NUCLEOTIDE SEQUENCE [GENOMIC DNA]</scope>
    <source>
        <strain>C57BL/6J</strain>
    </source>
</reference>
<reference key="2">
    <citation type="journal article" date="2004" name="Genome Res.">
        <title>The status, quality, and expansion of the NIH full-length cDNA project: the Mammalian Gene Collection (MGC).</title>
        <authorList>
            <consortium name="The MGC Project Team"/>
        </authorList>
    </citation>
    <scope>NUCLEOTIDE SEQUENCE [LARGE SCALE MRNA]</scope>
    <source>
        <tissue>Brain</tissue>
    </source>
</reference>
<feature type="chain" id="PRO_0000305301" description="Mas-related G-protein coupled receptor member B5">
    <location>
        <begin position="1"/>
        <end position="322"/>
    </location>
</feature>
<feature type="topological domain" description="Extracellular" evidence="2">
    <location>
        <begin position="1"/>
        <end position="34"/>
    </location>
</feature>
<feature type="transmembrane region" description="Helical; Name=1" evidence="2">
    <location>
        <begin position="35"/>
        <end position="55"/>
    </location>
</feature>
<feature type="topological domain" description="Cytoplasmic" evidence="2">
    <location>
        <begin position="56"/>
        <end position="70"/>
    </location>
</feature>
<feature type="transmembrane region" description="Helical; Name=2" evidence="2">
    <location>
        <begin position="71"/>
        <end position="91"/>
    </location>
</feature>
<feature type="topological domain" description="Extracellular" evidence="2">
    <location>
        <begin position="92"/>
        <end position="98"/>
    </location>
</feature>
<feature type="transmembrane region" description="Helical; Name=3" evidence="2">
    <location>
        <begin position="99"/>
        <end position="119"/>
    </location>
</feature>
<feature type="topological domain" description="Cytoplasmic" evidence="2">
    <location>
        <begin position="120"/>
        <end position="147"/>
    </location>
</feature>
<feature type="transmembrane region" description="Helical; Name=4" evidence="2">
    <location>
        <begin position="148"/>
        <end position="168"/>
    </location>
</feature>
<feature type="topological domain" description="Extracellular" evidence="2">
    <location>
        <begin position="169"/>
        <end position="172"/>
    </location>
</feature>
<feature type="transmembrane region" description="Helical; Name=5" evidence="2">
    <location>
        <begin position="173"/>
        <end position="193"/>
    </location>
</feature>
<feature type="topological domain" description="Cytoplasmic" evidence="2">
    <location>
        <begin position="194"/>
        <end position="216"/>
    </location>
</feature>
<feature type="transmembrane region" description="Helical; Name=6" evidence="2">
    <location>
        <begin position="217"/>
        <end position="237"/>
    </location>
</feature>
<feature type="topological domain" description="Extracellular" evidence="2">
    <location>
        <begin position="238"/>
        <end position="260"/>
    </location>
</feature>
<feature type="transmembrane region" description="Helical; Name=7" evidence="2">
    <location>
        <begin position="261"/>
        <end position="281"/>
    </location>
</feature>
<feature type="topological domain" description="Cytoplasmic" evidence="2">
    <location>
        <begin position="282"/>
        <end position="322"/>
    </location>
</feature>
<feature type="region of interest" description="Disordered" evidence="4">
    <location>
        <begin position="302"/>
        <end position="322"/>
    </location>
</feature>
<feature type="glycosylation site" description="N-linked (GlcNAc...) asparagine" evidence="2">
    <location>
        <position position="11"/>
    </location>
</feature>
<feature type="glycosylation site" description="N-linked (GlcNAc...) asparagine" evidence="2">
    <location>
        <position position="16"/>
    </location>
</feature>
<feature type="glycosylation site" description="N-linked (GlcNAc...) asparagine" evidence="2">
    <location>
        <position position="19"/>
    </location>
</feature>
<sequence length="322" mass="36285">MGLTTPAWNINNTVVNGSNNTEHFSCVSKFNTLNFLTVIIAMFGLAGNAIVLWLLAFHLPRNAFSVYVCNLACADFLQLCTQILGSLECFLQLNRRHTFFLTVVFMFAYLAGLCMIAAISVERSLSVMWPIWYHCQRPRHTSSIMCALLWAFCLLLNFLLGEGCGLLFSDPKYYFCITCALITTALIILLTVVPSVSSLALLVKMICGSHRIPVTRFYVTIALTLVVFIFLGLPFGIYSSFLIMFKEFQSIFSYHVLEVTIFLSCVNSCANPIIYFLVGSIRQHRLQWQSLKLLLQRAMQDTPEEDSGERVPSQRSGELESV</sequence>
<keyword id="KW-0297">G-protein coupled receptor</keyword>
<keyword id="KW-0325">Glycoprotein</keyword>
<keyword id="KW-0472">Membrane</keyword>
<keyword id="KW-0675">Receptor</keyword>
<keyword id="KW-1185">Reference proteome</keyword>
<keyword id="KW-0807">Transducer</keyword>
<keyword id="KW-0812">Transmembrane</keyword>
<keyword id="KW-1133">Transmembrane helix</keyword>
<name>MRGB5_MOUSE</name>
<evidence type="ECO:0000250" key="1"/>
<evidence type="ECO:0000255" key="2"/>
<evidence type="ECO:0000255" key="3">
    <source>
        <dbReference type="PROSITE-ProRule" id="PRU00521"/>
    </source>
</evidence>
<evidence type="ECO:0000256" key="4">
    <source>
        <dbReference type="SAM" id="MobiDB-lite"/>
    </source>
</evidence>
<evidence type="ECO:0000305" key="5"/>
<dbReference type="EMBL" id="AY042203">
    <property type="protein sequence ID" value="AAK91799.1"/>
    <property type="molecule type" value="Genomic_DNA"/>
</dbReference>
<dbReference type="EMBL" id="BC120849">
    <property type="protein sequence ID" value="AAI20850.1"/>
    <property type="molecule type" value="mRNA"/>
</dbReference>
<dbReference type="EMBL" id="BC132003">
    <property type="protein sequence ID" value="AAI32004.1"/>
    <property type="molecule type" value="mRNA"/>
</dbReference>
<dbReference type="CCDS" id="CCDS21300.1"/>
<dbReference type="RefSeq" id="NP_997421.1">
    <property type="nucleotide sequence ID" value="NM_207538.1"/>
</dbReference>
<dbReference type="SMR" id="Q91ZB9"/>
<dbReference type="FunCoup" id="Q91ZB9">
    <property type="interactions" value="29"/>
</dbReference>
<dbReference type="STRING" id="10090.ENSMUSP00000091953"/>
<dbReference type="GlyCosmos" id="Q91ZB9">
    <property type="glycosylation" value="3 sites, No reported glycans"/>
</dbReference>
<dbReference type="GlyGen" id="Q91ZB9">
    <property type="glycosylation" value="4 sites"/>
</dbReference>
<dbReference type="PaxDb" id="10090-ENSMUSP00000091953"/>
<dbReference type="DNASU" id="404239"/>
<dbReference type="Ensembl" id="ENSMUST00000094389.4">
    <property type="protein sequence ID" value="ENSMUSP00000091953.3"/>
    <property type="gene ID" value="ENSMUSG00000070551.4"/>
</dbReference>
<dbReference type="GeneID" id="404239"/>
<dbReference type="KEGG" id="mmu:404239"/>
<dbReference type="UCSC" id="uc009ham.1">
    <property type="organism name" value="mouse"/>
</dbReference>
<dbReference type="AGR" id="MGI:3033121"/>
<dbReference type="CTD" id="404239"/>
<dbReference type="MGI" id="MGI:3033121">
    <property type="gene designation" value="Mrgprb5"/>
</dbReference>
<dbReference type="VEuPathDB" id="HostDB:ENSMUSG00000070551"/>
<dbReference type="eggNOG" id="ENOG502RTWA">
    <property type="taxonomic scope" value="Eukaryota"/>
</dbReference>
<dbReference type="GeneTree" id="ENSGT01030000234639"/>
<dbReference type="HOGENOM" id="CLU_009579_4_1_1"/>
<dbReference type="InParanoid" id="Q91ZB9"/>
<dbReference type="OMA" id="YDEMNIL"/>
<dbReference type="OrthoDB" id="9631784at2759"/>
<dbReference type="PhylomeDB" id="Q91ZB9"/>
<dbReference type="TreeFam" id="TF336336"/>
<dbReference type="BioGRID-ORCS" id="404239">
    <property type="hits" value="1 hit in 76 CRISPR screens"/>
</dbReference>
<dbReference type="PRO" id="PR:Q91ZB9"/>
<dbReference type="Proteomes" id="UP000000589">
    <property type="component" value="Chromosome 7"/>
</dbReference>
<dbReference type="RNAct" id="Q91ZB9">
    <property type="molecule type" value="protein"/>
</dbReference>
<dbReference type="ExpressionAtlas" id="Q91ZB9">
    <property type="expression patterns" value="baseline and differential"/>
</dbReference>
<dbReference type="GO" id="GO:0016020">
    <property type="term" value="C:membrane"/>
    <property type="evidence" value="ECO:0007669"/>
    <property type="project" value="UniProtKB-SubCell"/>
</dbReference>
<dbReference type="GO" id="GO:0004930">
    <property type="term" value="F:G protein-coupled receptor activity"/>
    <property type="evidence" value="ECO:0007669"/>
    <property type="project" value="UniProtKB-KW"/>
</dbReference>
<dbReference type="CDD" id="cd15107">
    <property type="entry name" value="7tmA_MrgprB"/>
    <property type="match status" value="1"/>
</dbReference>
<dbReference type="FunFam" id="1.20.1070.10:FF:000140">
    <property type="entry name" value="Mas-related G-protein coupled receptor member X2"/>
    <property type="match status" value="1"/>
</dbReference>
<dbReference type="Gene3D" id="1.20.1070.10">
    <property type="entry name" value="Rhodopsin 7-helix transmembrane proteins"/>
    <property type="match status" value="1"/>
</dbReference>
<dbReference type="InterPro" id="IPR000276">
    <property type="entry name" value="GPCR_Rhodpsn"/>
</dbReference>
<dbReference type="InterPro" id="IPR017452">
    <property type="entry name" value="GPCR_Rhodpsn_7TM"/>
</dbReference>
<dbReference type="InterPro" id="IPR026234">
    <property type="entry name" value="MRGPCRFAMILY"/>
</dbReference>
<dbReference type="PANTHER" id="PTHR11334">
    <property type="entry name" value="MAS-RELATED G-PROTEIN COUPLED RECEPTOR"/>
    <property type="match status" value="1"/>
</dbReference>
<dbReference type="PANTHER" id="PTHR11334:SF36">
    <property type="entry name" value="MAS-RELATED G-PROTEIN COUPLED RECEPTOR MEMBER B4-RELATED"/>
    <property type="match status" value="1"/>
</dbReference>
<dbReference type="Pfam" id="PF00001">
    <property type="entry name" value="7tm_1"/>
    <property type="match status" value="1"/>
</dbReference>
<dbReference type="PRINTS" id="PR00237">
    <property type="entry name" value="GPCRRHODOPSN"/>
</dbReference>
<dbReference type="PRINTS" id="PR02108">
    <property type="entry name" value="MRGPCRFAMILY"/>
</dbReference>
<dbReference type="SUPFAM" id="SSF81321">
    <property type="entry name" value="Family A G protein-coupled receptor-like"/>
    <property type="match status" value="1"/>
</dbReference>
<dbReference type="PROSITE" id="PS00237">
    <property type="entry name" value="G_PROTEIN_RECEP_F1_1"/>
    <property type="match status" value="1"/>
</dbReference>
<dbReference type="PROSITE" id="PS50262">
    <property type="entry name" value="G_PROTEIN_RECEP_F1_2"/>
    <property type="match status" value="1"/>
</dbReference>
<accession>Q91ZB9</accession>
<comment type="function">
    <text evidence="1">Orphan receptor. Probably involved in the function of nociceptive neurons. May regulate nociceptor function and/or development, including the sensation or modulation of pain (By similarity).</text>
</comment>
<comment type="subcellular location">
    <subcellularLocation>
        <location evidence="5">Membrane</location>
        <topology evidence="5">Multi-pass membrane protein</topology>
    </subcellularLocation>
</comment>
<comment type="similarity">
    <text evidence="3">Belongs to the G-protein coupled receptor 1 family. Mas subfamily.</text>
</comment>
<protein>
    <recommendedName>
        <fullName>Mas-related G-protein coupled receptor member B5</fullName>
    </recommendedName>
</protein>
<gene>
    <name type="primary">Mrgprb5</name>
    <name type="synonym">Mrgb5</name>
</gene>
<organism>
    <name type="scientific">Mus musculus</name>
    <name type="common">Mouse</name>
    <dbReference type="NCBI Taxonomy" id="10090"/>
    <lineage>
        <taxon>Eukaryota</taxon>
        <taxon>Metazoa</taxon>
        <taxon>Chordata</taxon>
        <taxon>Craniata</taxon>
        <taxon>Vertebrata</taxon>
        <taxon>Euteleostomi</taxon>
        <taxon>Mammalia</taxon>
        <taxon>Eutheria</taxon>
        <taxon>Euarchontoglires</taxon>
        <taxon>Glires</taxon>
        <taxon>Rodentia</taxon>
        <taxon>Myomorpha</taxon>
        <taxon>Muroidea</taxon>
        <taxon>Muridae</taxon>
        <taxon>Murinae</taxon>
        <taxon>Mus</taxon>
        <taxon>Mus</taxon>
    </lineage>
</organism>